<organism>
    <name type="scientific">Arabidopsis thaliana</name>
    <name type="common">Mouse-ear cress</name>
    <dbReference type="NCBI Taxonomy" id="3702"/>
    <lineage>
        <taxon>Eukaryota</taxon>
        <taxon>Viridiplantae</taxon>
        <taxon>Streptophyta</taxon>
        <taxon>Embryophyta</taxon>
        <taxon>Tracheophyta</taxon>
        <taxon>Spermatophyta</taxon>
        <taxon>Magnoliopsida</taxon>
        <taxon>eudicotyledons</taxon>
        <taxon>Gunneridae</taxon>
        <taxon>Pentapetalae</taxon>
        <taxon>rosids</taxon>
        <taxon>malvids</taxon>
        <taxon>Brassicales</taxon>
        <taxon>Brassicaceae</taxon>
        <taxon>Camelineae</taxon>
        <taxon>Arabidopsis</taxon>
    </lineage>
</organism>
<accession>Q9FKZ0</accession>
<sequence length="815" mass="92930">MVVVDWLGLGLGSVAGALVSEGLKVLISEAKKVLAFKSVSNELASTMESLLPVIKEIESMQDGMELQDLKDTIDKALLLVEKCSHVEKWNIILKSKYTRKVEEINRKMLKFCQVQLQLLLFRNQLKSMPSMEAILNNYFQNINKKLDRLSGSPAPPLVSKRCSVPKLDNMVLVGLDWPLVELKKKLLDNSVVVVSGPPGCGKTTLVTKLCDDPEIEGEFKKIFYSVVSNTPNFRAIVQNLLQDNGCGAITFDDDSQAETGLRDLLEELTKDGRILLVLDDVWQGSEFLLRKFQIDLPDYKILVTSQFDFTSLWPTYHLVPLKYEYARSLLIQWASPPLHTSPDEYEDLLQKILKRCNGFPLVIEVVGISLKGQALYLWKGQVESWSEGETILGNANPTVRQRLQPSFNVLKPHLKECFMDMGSFLQDQKIRASLIIDIWMELYGRGSSSTNKFMLYLNELASQNLLKLVHLGTNKREDGFYNELLVTQHNILRELAIFQSELEPIMQRKKLNLEIREDNFPDECLNQPINARLLSIYTDDLFSSKWLEMDCPNVEALVLNISSLDYALPSFIAEMKKLKVLTIANHGFYPARLSNFSCLSSLPNLKRIRFEKVSVTLLDIPQLQLGSLKKLSFFMCSFGEVFYDTEDIDVSKALSNLQEIDIDYCYDLDELPYWIPEVVSLKTLSITNCNKLSQLPEAIGNLSRLEVLRMCSCMNLSELPEATERLSNLRSLDISHCLGLRKLPQEIGKLQKLENISMRKCSGCELPDSVRYLENLEVKCDEVTGLLWERLMPEMRNLRVHTEETEHNLKLLLTF</sequence>
<name>DRL43_ARATH</name>
<comment type="function">
    <text evidence="1">Probable disease resistance protein.</text>
</comment>
<comment type="domain">
    <text evidence="1">The LRR repeats probably act as specificity determinant of pathogen recognition.</text>
</comment>
<comment type="similarity">
    <text evidence="4">Belongs to the disease resistance NB-LRR family.</text>
</comment>
<comment type="online information" name="NIB-LRRS">
    <link uri="http://niblrrs.ucdavis.edu"/>
    <text>Functional and comparative genomics of disease resistance gene homologs</text>
</comment>
<protein>
    <recommendedName>
        <fullName>Probable disease resistance protein At5g66910</fullName>
    </recommendedName>
</protein>
<keyword id="KW-0067">ATP-binding</keyword>
<keyword id="KW-0433">Leucine-rich repeat</keyword>
<keyword id="KW-0547">Nucleotide-binding</keyword>
<keyword id="KW-0611">Plant defense</keyword>
<keyword id="KW-1185">Reference proteome</keyword>
<keyword id="KW-0677">Repeat</keyword>
<dbReference type="EMBL" id="AB010700">
    <property type="protein sequence ID" value="BAB08633.1"/>
    <property type="molecule type" value="Genomic_DNA"/>
</dbReference>
<dbReference type="EMBL" id="CP002688">
    <property type="protein sequence ID" value="AED98277.1"/>
    <property type="molecule type" value="Genomic_DNA"/>
</dbReference>
<dbReference type="EMBL" id="AF462802">
    <property type="protein sequence ID" value="AAL58897.1"/>
    <property type="molecule type" value="mRNA"/>
</dbReference>
<dbReference type="RefSeq" id="NP_201492.1">
    <property type="nucleotide sequence ID" value="NM_126090.5"/>
</dbReference>
<dbReference type="SMR" id="Q9FKZ0"/>
<dbReference type="FunCoup" id="Q9FKZ0">
    <property type="interactions" value="139"/>
</dbReference>
<dbReference type="STRING" id="3702.Q9FKZ0"/>
<dbReference type="iPTMnet" id="Q9FKZ0"/>
<dbReference type="PaxDb" id="3702-AT5G66910.1"/>
<dbReference type="ProteomicsDB" id="224342"/>
<dbReference type="EnsemblPlants" id="AT5G66910.1">
    <property type="protein sequence ID" value="AT5G66910.1"/>
    <property type="gene ID" value="AT5G66910"/>
</dbReference>
<dbReference type="GeneID" id="836825"/>
<dbReference type="Gramene" id="AT5G66910.1">
    <property type="protein sequence ID" value="AT5G66910.1"/>
    <property type="gene ID" value="AT5G66910"/>
</dbReference>
<dbReference type="KEGG" id="ath:AT5G66910"/>
<dbReference type="Araport" id="AT5G66910"/>
<dbReference type="TAIR" id="AT5G66910">
    <property type="gene designation" value="NRG1.2"/>
</dbReference>
<dbReference type="eggNOG" id="ENOG502QSSA">
    <property type="taxonomic scope" value="Eukaryota"/>
</dbReference>
<dbReference type="HOGENOM" id="CLU_012216_0_0_1"/>
<dbReference type="InParanoid" id="Q9FKZ0"/>
<dbReference type="OMA" id="TEETEHN"/>
<dbReference type="PhylomeDB" id="Q9FKZ0"/>
<dbReference type="PRO" id="PR:Q9FKZ0"/>
<dbReference type="Proteomes" id="UP000006548">
    <property type="component" value="Chromosome 5"/>
</dbReference>
<dbReference type="ExpressionAtlas" id="Q9FKZ0">
    <property type="expression patterns" value="baseline and differential"/>
</dbReference>
<dbReference type="GO" id="GO:0005829">
    <property type="term" value="C:cytosol"/>
    <property type="evidence" value="ECO:0000314"/>
    <property type="project" value="TAIR"/>
</dbReference>
<dbReference type="GO" id="GO:0012505">
    <property type="term" value="C:endomembrane system"/>
    <property type="evidence" value="ECO:0000314"/>
    <property type="project" value="TAIR"/>
</dbReference>
<dbReference type="GO" id="GO:0043531">
    <property type="term" value="F:ADP binding"/>
    <property type="evidence" value="ECO:0007669"/>
    <property type="project" value="InterPro"/>
</dbReference>
<dbReference type="GO" id="GO:0005524">
    <property type="term" value="F:ATP binding"/>
    <property type="evidence" value="ECO:0007669"/>
    <property type="project" value="UniProtKB-KW"/>
</dbReference>
<dbReference type="GO" id="GO:0006952">
    <property type="term" value="P:defense response"/>
    <property type="evidence" value="ECO:0007669"/>
    <property type="project" value="UniProtKB-KW"/>
</dbReference>
<dbReference type="FunFam" id="1.10.10.10:FF:000322">
    <property type="entry name" value="Probable disease resistance protein At1g63360"/>
    <property type="match status" value="1"/>
</dbReference>
<dbReference type="FunFam" id="3.80.10.10:FF:001428">
    <property type="entry name" value="Probable disease resistance protein At5g04720"/>
    <property type="match status" value="1"/>
</dbReference>
<dbReference type="FunFam" id="3.80.10.10:FF:002186">
    <property type="entry name" value="Probable disease resistance protein At5g04720"/>
    <property type="match status" value="1"/>
</dbReference>
<dbReference type="FunFam" id="3.40.50.300:FF:003793">
    <property type="entry name" value="Probable disease resistance protein At5g66900"/>
    <property type="match status" value="1"/>
</dbReference>
<dbReference type="Gene3D" id="1.10.8.430">
    <property type="entry name" value="Helical domain of apoptotic protease-activating factors"/>
    <property type="match status" value="1"/>
</dbReference>
<dbReference type="Gene3D" id="3.40.50.300">
    <property type="entry name" value="P-loop containing nucleotide triphosphate hydrolases"/>
    <property type="match status" value="1"/>
</dbReference>
<dbReference type="Gene3D" id="3.80.10.10">
    <property type="entry name" value="Ribonuclease Inhibitor"/>
    <property type="match status" value="2"/>
</dbReference>
<dbReference type="Gene3D" id="1.10.10.10">
    <property type="entry name" value="Winged helix-like DNA-binding domain superfamily/Winged helix DNA-binding domain"/>
    <property type="match status" value="1"/>
</dbReference>
<dbReference type="InterPro" id="IPR042197">
    <property type="entry name" value="Apaf_helical"/>
</dbReference>
<dbReference type="InterPro" id="IPR001611">
    <property type="entry name" value="Leu-rich_rpt"/>
</dbReference>
<dbReference type="InterPro" id="IPR032675">
    <property type="entry name" value="LRR_dom_sf"/>
</dbReference>
<dbReference type="InterPro" id="IPR002182">
    <property type="entry name" value="NB-ARC"/>
</dbReference>
<dbReference type="InterPro" id="IPR027417">
    <property type="entry name" value="P-loop_NTPase"/>
</dbReference>
<dbReference type="InterPro" id="IPR008808">
    <property type="entry name" value="Powdery_mildew-R_dom"/>
</dbReference>
<dbReference type="InterPro" id="IPR036388">
    <property type="entry name" value="WH-like_DNA-bd_sf"/>
</dbReference>
<dbReference type="PANTHER" id="PTHR36766">
    <property type="entry name" value="PLANT BROAD-SPECTRUM MILDEW RESISTANCE PROTEIN RPW8"/>
    <property type="match status" value="1"/>
</dbReference>
<dbReference type="PANTHER" id="PTHR36766:SF3">
    <property type="entry name" value="RPW8 DOMAIN-CONTAINING PROTEIN"/>
    <property type="match status" value="1"/>
</dbReference>
<dbReference type="Pfam" id="PF00560">
    <property type="entry name" value="LRR_1"/>
    <property type="match status" value="1"/>
</dbReference>
<dbReference type="Pfam" id="PF00931">
    <property type="entry name" value="NB-ARC"/>
    <property type="match status" value="1"/>
</dbReference>
<dbReference type="Pfam" id="PF05659">
    <property type="entry name" value="RPW8"/>
    <property type="match status" value="1"/>
</dbReference>
<dbReference type="PRINTS" id="PR00364">
    <property type="entry name" value="DISEASERSIST"/>
</dbReference>
<dbReference type="SUPFAM" id="SSF52540">
    <property type="entry name" value="P-loop containing nucleoside triphosphate hydrolases"/>
    <property type="match status" value="1"/>
</dbReference>
<dbReference type="SUPFAM" id="SSF52047">
    <property type="entry name" value="RNI-like"/>
    <property type="match status" value="1"/>
</dbReference>
<dbReference type="PROSITE" id="PS51153">
    <property type="entry name" value="RPW8"/>
    <property type="match status" value="1"/>
</dbReference>
<feature type="chain" id="PRO_0000212775" description="Probable disease resistance protein At5g66910">
    <location>
        <begin position="1"/>
        <end position="815"/>
    </location>
</feature>
<feature type="domain" description="RPW8" evidence="3">
    <location>
        <begin position="1"/>
        <end position="150"/>
    </location>
</feature>
<feature type="domain" description="NB-ARC 1">
    <location>
        <begin position="156"/>
        <end position="283"/>
    </location>
</feature>
<feature type="domain" description="NB-ARC 2">
    <location>
        <begin position="341"/>
        <end position="440"/>
    </location>
</feature>
<feature type="repeat" description="LRR 1">
    <location>
        <begin position="656"/>
        <end position="678"/>
    </location>
</feature>
<feature type="repeat" description="LRR 2">
    <location>
        <begin position="680"/>
        <end position="702"/>
    </location>
</feature>
<feature type="repeat" description="LRR 3">
    <location>
        <begin position="704"/>
        <end position="726"/>
    </location>
</feature>
<feature type="repeat" description="LRR 4">
    <location>
        <begin position="728"/>
        <end position="750"/>
    </location>
</feature>
<feature type="binding site" evidence="2">
    <location>
        <begin position="196"/>
        <end position="203"/>
    </location>
    <ligand>
        <name>ATP</name>
        <dbReference type="ChEBI" id="CHEBI:30616"/>
    </ligand>
</feature>
<gene>
    <name type="ordered locus">At5g66910</name>
    <name type="ORF">MUD21.17</name>
</gene>
<reference key="1">
    <citation type="journal article" date="1998" name="DNA Res.">
        <title>Structural analysis of Arabidopsis thaliana chromosome 5. V. Sequence features of the regions of 1,381,565 bp covered by twenty one physically assigned P1 and TAC clones.</title>
        <authorList>
            <person name="Kaneko T."/>
            <person name="Kotani H."/>
            <person name="Nakamura Y."/>
            <person name="Sato S."/>
            <person name="Asamizu E."/>
            <person name="Miyajima N."/>
            <person name="Tabata S."/>
        </authorList>
    </citation>
    <scope>NUCLEOTIDE SEQUENCE [LARGE SCALE GENOMIC DNA]</scope>
    <source>
        <strain>cv. Columbia</strain>
    </source>
</reference>
<reference key="2">
    <citation type="journal article" date="2017" name="Plant J.">
        <title>Araport11: a complete reannotation of the Arabidopsis thaliana reference genome.</title>
        <authorList>
            <person name="Cheng C.Y."/>
            <person name="Krishnakumar V."/>
            <person name="Chan A.P."/>
            <person name="Thibaud-Nissen F."/>
            <person name="Schobel S."/>
            <person name="Town C.D."/>
        </authorList>
    </citation>
    <scope>GENOME REANNOTATION</scope>
    <source>
        <strain>cv. Columbia</strain>
    </source>
</reference>
<reference key="3">
    <citation type="journal article" date="2003" name="Science">
        <title>Empirical analysis of transcriptional activity in the Arabidopsis genome.</title>
        <authorList>
            <person name="Yamada K."/>
            <person name="Lim J."/>
            <person name="Dale J.M."/>
            <person name="Chen H."/>
            <person name="Shinn P."/>
            <person name="Palm C.J."/>
            <person name="Southwick A.M."/>
            <person name="Wu H.C."/>
            <person name="Kim C.J."/>
            <person name="Nguyen M."/>
            <person name="Pham P.K."/>
            <person name="Cheuk R.F."/>
            <person name="Karlin-Newmann G."/>
            <person name="Liu S.X."/>
            <person name="Lam B."/>
            <person name="Sakano H."/>
            <person name="Wu T."/>
            <person name="Yu G."/>
            <person name="Miranda M."/>
            <person name="Quach H.L."/>
            <person name="Tripp M."/>
            <person name="Chang C.H."/>
            <person name="Lee J.M."/>
            <person name="Toriumi M.J."/>
            <person name="Chan M.M."/>
            <person name="Tang C.C."/>
            <person name="Onodera C.S."/>
            <person name="Deng J.M."/>
            <person name="Akiyama K."/>
            <person name="Ansari Y."/>
            <person name="Arakawa T."/>
            <person name="Banh J."/>
            <person name="Banno F."/>
            <person name="Bowser L."/>
            <person name="Brooks S.Y."/>
            <person name="Carninci P."/>
            <person name="Chao Q."/>
            <person name="Choy N."/>
            <person name="Enju A."/>
            <person name="Goldsmith A.D."/>
            <person name="Gurjal M."/>
            <person name="Hansen N.F."/>
            <person name="Hayashizaki Y."/>
            <person name="Johnson-Hopson C."/>
            <person name="Hsuan V.W."/>
            <person name="Iida K."/>
            <person name="Karnes M."/>
            <person name="Khan S."/>
            <person name="Koesema E."/>
            <person name="Ishida J."/>
            <person name="Jiang P.X."/>
            <person name="Jones T."/>
            <person name="Kawai J."/>
            <person name="Kamiya A."/>
            <person name="Meyers C."/>
            <person name="Nakajima M."/>
            <person name="Narusaka M."/>
            <person name="Seki M."/>
            <person name="Sakurai T."/>
            <person name="Satou M."/>
            <person name="Tamse R."/>
            <person name="Vaysberg M."/>
            <person name="Wallender E.K."/>
            <person name="Wong C."/>
            <person name="Yamamura Y."/>
            <person name="Yuan S."/>
            <person name="Shinozaki K."/>
            <person name="Davis R.W."/>
            <person name="Theologis A."/>
            <person name="Ecker J.R."/>
        </authorList>
    </citation>
    <scope>NUCLEOTIDE SEQUENCE [LARGE SCALE MRNA]</scope>
    <source>
        <strain>cv. Columbia</strain>
    </source>
</reference>
<evidence type="ECO:0000250" key="1"/>
<evidence type="ECO:0000255" key="2"/>
<evidence type="ECO:0000255" key="3">
    <source>
        <dbReference type="PROSITE-ProRule" id="PRU00495"/>
    </source>
</evidence>
<evidence type="ECO:0000305" key="4"/>
<proteinExistence type="evidence at transcript level"/>